<protein>
    <recommendedName>
        <fullName evidence="1">Glycine--tRNA ligase beta subunit</fullName>
        <ecNumber evidence="1">6.1.1.14</ecNumber>
    </recommendedName>
    <alternativeName>
        <fullName evidence="1">Glycyl-tRNA synthetase beta subunit</fullName>
        <shortName evidence="1">GlyRS</shortName>
    </alternativeName>
</protein>
<reference key="1">
    <citation type="journal article" date="2006" name="Proc. Natl. Acad. Sci. U.S.A.">
        <title>Comparative genomics of the lactic acid bacteria.</title>
        <authorList>
            <person name="Makarova K.S."/>
            <person name="Slesarev A."/>
            <person name="Wolf Y.I."/>
            <person name="Sorokin A."/>
            <person name="Mirkin B."/>
            <person name="Koonin E.V."/>
            <person name="Pavlov A."/>
            <person name="Pavlova N."/>
            <person name="Karamychev V."/>
            <person name="Polouchine N."/>
            <person name="Shakhova V."/>
            <person name="Grigoriev I."/>
            <person name="Lou Y."/>
            <person name="Rohksar D."/>
            <person name="Lucas S."/>
            <person name="Huang K."/>
            <person name="Goodstein D.M."/>
            <person name="Hawkins T."/>
            <person name="Plengvidhya V."/>
            <person name="Welker D."/>
            <person name="Hughes J."/>
            <person name="Goh Y."/>
            <person name="Benson A."/>
            <person name="Baldwin K."/>
            <person name="Lee J.-H."/>
            <person name="Diaz-Muniz I."/>
            <person name="Dosti B."/>
            <person name="Smeianov V."/>
            <person name="Wechter W."/>
            <person name="Barabote R."/>
            <person name="Lorca G."/>
            <person name="Altermann E."/>
            <person name="Barrangou R."/>
            <person name="Ganesan B."/>
            <person name="Xie Y."/>
            <person name="Rawsthorne H."/>
            <person name="Tamir D."/>
            <person name="Parker C."/>
            <person name="Breidt F."/>
            <person name="Broadbent J.R."/>
            <person name="Hutkins R."/>
            <person name="O'Sullivan D."/>
            <person name="Steele J."/>
            <person name="Unlu G."/>
            <person name="Saier M.H. Jr."/>
            <person name="Klaenhammer T."/>
            <person name="Richardson P."/>
            <person name="Kozyavkin S."/>
            <person name="Weimer B.C."/>
            <person name="Mills D.A."/>
        </authorList>
    </citation>
    <scope>NUCLEOTIDE SEQUENCE [LARGE SCALE GENOMIC DNA]</scope>
    <source>
        <strain>SK11</strain>
    </source>
</reference>
<organism>
    <name type="scientific">Lactococcus lactis subsp. cremoris (strain SK11)</name>
    <dbReference type="NCBI Taxonomy" id="272622"/>
    <lineage>
        <taxon>Bacteria</taxon>
        <taxon>Bacillati</taxon>
        <taxon>Bacillota</taxon>
        <taxon>Bacilli</taxon>
        <taxon>Lactobacillales</taxon>
        <taxon>Streptococcaceae</taxon>
        <taxon>Lactococcus</taxon>
        <taxon>Lactococcus cremoris subsp. cremoris</taxon>
    </lineage>
</organism>
<sequence>MTNYLLEIGLEEIPAHLVTPSINQLAERMEAFLNENRLKFDKIIKFSTPRRLALIVEGLSESSEAIDEEVKGPSAKIAKDAEGNWSKAIQGFSRGQGATPDDLILKGDYYYAKKHVDGVKAEEILSKVGDEVIAKMTFSTYMKWGNNDFLFVRPIQWIVSLLEDEIVAFDLLDVTANRFSRGHRFLANVEIELKNANDYASKMPENFVLVDAEHRKAEISAQILALASENNWQVTLHKDLLEEVNNIVEYPTAFVGSFDPKYLSVPAEVLVTSMRDNQRYFEVYNQEGQLAPNFISVRNGNAEHIENVVLGNEKVLVARLEDAEFFWKEDQKLKIEDLVAKLGKVTFHAKIGSITEHMARTKLIAAKLADIAGLTDEEKVDVARSAEIYKFDLLTGMVGEFDELQGVMGEKYALLAGENANVAAAIREHYMPTSADGQLPETKVGSVLAAADKIDSVLSFFNVGLIPSGSNDPYALRRAVQGLIRIIEKMNWHFDLSLFIDQFEGQNHAEILEFVKARVQKLLLEKLDRYDIVEAAINSSNFDITNMMESAFVIDGHKLHEPFKPAIENVSRSINLVKKAADIAEINPALFEEDTEQALYDAVISLQNQWTYKPCEEKFRAIVHTLAPAIEAFFDNVMVMAEDLAVRDNRIALLSEVVALTSVMADFSLINTK</sequence>
<feature type="chain" id="PRO_1000101294" description="Glycine--tRNA ligase beta subunit">
    <location>
        <begin position="1"/>
        <end position="673"/>
    </location>
</feature>
<proteinExistence type="inferred from homology"/>
<keyword id="KW-0030">Aminoacyl-tRNA synthetase</keyword>
<keyword id="KW-0067">ATP-binding</keyword>
<keyword id="KW-0963">Cytoplasm</keyword>
<keyword id="KW-0436">Ligase</keyword>
<keyword id="KW-0547">Nucleotide-binding</keyword>
<keyword id="KW-0648">Protein biosynthesis</keyword>
<comment type="catalytic activity">
    <reaction evidence="1">
        <text>tRNA(Gly) + glycine + ATP = glycyl-tRNA(Gly) + AMP + diphosphate</text>
        <dbReference type="Rhea" id="RHEA:16013"/>
        <dbReference type="Rhea" id="RHEA-COMP:9664"/>
        <dbReference type="Rhea" id="RHEA-COMP:9683"/>
        <dbReference type="ChEBI" id="CHEBI:30616"/>
        <dbReference type="ChEBI" id="CHEBI:33019"/>
        <dbReference type="ChEBI" id="CHEBI:57305"/>
        <dbReference type="ChEBI" id="CHEBI:78442"/>
        <dbReference type="ChEBI" id="CHEBI:78522"/>
        <dbReference type="ChEBI" id="CHEBI:456215"/>
        <dbReference type="EC" id="6.1.1.14"/>
    </reaction>
</comment>
<comment type="subunit">
    <text evidence="1">Tetramer of two alpha and two beta subunits.</text>
</comment>
<comment type="subcellular location">
    <subcellularLocation>
        <location evidence="1">Cytoplasm</location>
    </subcellularLocation>
</comment>
<comment type="similarity">
    <text evidence="1">Belongs to the class-II aminoacyl-tRNA synthetase family.</text>
</comment>
<evidence type="ECO:0000255" key="1">
    <source>
        <dbReference type="HAMAP-Rule" id="MF_00255"/>
    </source>
</evidence>
<accession>Q02Z93</accession>
<gene>
    <name evidence="1" type="primary">glyS</name>
    <name type="ordered locus">LACR_1197</name>
</gene>
<dbReference type="EC" id="6.1.1.14" evidence="1"/>
<dbReference type="EMBL" id="CP000425">
    <property type="protein sequence ID" value="ABJ72729.1"/>
    <property type="molecule type" value="Genomic_DNA"/>
</dbReference>
<dbReference type="RefSeq" id="WP_011676102.1">
    <property type="nucleotide sequence ID" value="NC_008527.1"/>
</dbReference>
<dbReference type="SMR" id="Q02Z93"/>
<dbReference type="KEGG" id="llc:LACR_1197"/>
<dbReference type="HOGENOM" id="CLU_007220_2_2_9"/>
<dbReference type="Proteomes" id="UP000000240">
    <property type="component" value="Chromosome"/>
</dbReference>
<dbReference type="GO" id="GO:0005829">
    <property type="term" value="C:cytosol"/>
    <property type="evidence" value="ECO:0007669"/>
    <property type="project" value="TreeGrafter"/>
</dbReference>
<dbReference type="GO" id="GO:0005524">
    <property type="term" value="F:ATP binding"/>
    <property type="evidence" value="ECO:0007669"/>
    <property type="project" value="UniProtKB-UniRule"/>
</dbReference>
<dbReference type="GO" id="GO:0004820">
    <property type="term" value="F:glycine-tRNA ligase activity"/>
    <property type="evidence" value="ECO:0007669"/>
    <property type="project" value="UniProtKB-UniRule"/>
</dbReference>
<dbReference type="GO" id="GO:0006426">
    <property type="term" value="P:glycyl-tRNA aminoacylation"/>
    <property type="evidence" value="ECO:0007669"/>
    <property type="project" value="UniProtKB-UniRule"/>
</dbReference>
<dbReference type="HAMAP" id="MF_00255">
    <property type="entry name" value="Gly_tRNA_synth_beta"/>
    <property type="match status" value="1"/>
</dbReference>
<dbReference type="InterPro" id="IPR015944">
    <property type="entry name" value="Gly-tRNA-synth_bsu"/>
</dbReference>
<dbReference type="InterPro" id="IPR006194">
    <property type="entry name" value="Gly-tRNA-synth_heterodimer"/>
</dbReference>
<dbReference type="NCBIfam" id="TIGR00211">
    <property type="entry name" value="glyS"/>
    <property type="match status" value="1"/>
</dbReference>
<dbReference type="PANTHER" id="PTHR30075:SF2">
    <property type="entry name" value="GLYCINE--TRNA LIGASE, CHLOROPLASTIC_MITOCHONDRIAL 2"/>
    <property type="match status" value="1"/>
</dbReference>
<dbReference type="PANTHER" id="PTHR30075">
    <property type="entry name" value="GLYCYL-TRNA SYNTHETASE"/>
    <property type="match status" value="1"/>
</dbReference>
<dbReference type="Pfam" id="PF02092">
    <property type="entry name" value="tRNA_synt_2f"/>
    <property type="match status" value="1"/>
</dbReference>
<dbReference type="PRINTS" id="PR01045">
    <property type="entry name" value="TRNASYNTHGB"/>
</dbReference>
<dbReference type="SUPFAM" id="SSF109604">
    <property type="entry name" value="HD-domain/PDEase-like"/>
    <property type="match status" value="1"/>
</dbReference>
<dbReference type="PROSITE" id="PS50861">
    <property type="entry name" value="AA_TRNA_LIGASE_II_GLYAB"/>
    <property type="match status" value="1"/>
</dbReference>
<name>SYGB_LACLS</name>